<protein>
    <recommendedName>
        <fullName>Uncharacterized oxidoreductase Rv1714</fullName>
        <ecNumber>1.-.-.-</ecNumber>
    </recommendedName>
</protein>
<gene>
    <name type="ordered locus">Rv1714</name>
</gene>
<evidence type="ECO:0000250" key="1"/>
<evidence type="ECO:0000305" key="2"/>
<proteinExistence type="inferred from homology"/>
<comment type="miscellaneous">
    <text>Was identified as a high-confidence drug target.</text>
</comment>
<comment type="similarity">
    <text evidence="2">Belongs to the short-chain dehydrogenases/reductases (SDR) family.</text>
</comment>
<keyword id="KW-0560">Oxidoreductase</keyword>
<keyword id="KW-1185">Reference proteome</keyword>
<reference key="1">
    <citation type="journal article" date="1998" name="Nature">
        <title>Deciphering the biology of Mycobacterium tuberculosis from the complete genome sequence.</title>
        <authorList>
            <person name="Cole S.T."/>
            <person name="Brosch R."/>
            <person name="Parkhill J."/>
            <person name="Garnier T."/>
            <person name="Churcher C.M."/>
            <person name="Harris D.E."/>
            <person name="Gordon S.V."/>
            <person name="Eiglmeier K."/>
            <person name="Gas S."/>
            <person name="Barry C.E. III"/>
            <person name="Tekaia F."/>
            <person name="Badcock K."/>
            <person name="Basham D."/>
            <person name="Brown D."/>
            <person name="Chillingworth T."/>
            <person name="Connor R."/>
            <person name="Davies R.M."/>
            <person name="Devlin K."/>
            <person name="Feltwell T."/>
            <person name="Gentles S."/>
            <person name="Hamlin N."/>
            <person name="Holroyd S."/>
            <person name="Hornsby T."/>
            <person name="Jagels K."/>
            <person name="Krogh A."/>
            <person name="McLean J."/>
            <person name="Moule S."/>
            <person name="Murphy L.D."/>
            <person name="Oliver S."/>
            <person name="Osborne J."/>
            <person name="Quail M.A."/>
            <person name="Rajandream M.A."/>
            <person name="Rogers J."/>
            <person name="Rutter S."/>
            <person name="Seeger K."/>
            <person name="Skelton S."/>
            <person name="Squares S."/>
            <person name="Squares R."/>
            <person name="Sulston J.E."/>
            <person name="Taylor K."/>
            <person name="Whitehead S."/>
            <person name="Barrell B.G."/>
        </authorList>
    </citation>
    <scope>NUCLEOTIDE SEQUENCE [LARGE SCALE GENOMIC DNA]</scope>
    <source>
        <strain>ATCC 25618 / H37Rv</strain>
    </source>
</reference>
<reference key="2">
    <citation type="journal article" date="2008" name="BMC Syst. Biol.">
        <title>targetTB: a target identification pipeline for Mycobacterium tuberculosis through an interactome, reactome and genome-scale structural analysis.</title>
        <authorList>
            <person name="Raman K."/>
            <person name="Yeturu K."/>
            <person name="Chandra N."/>
        </authorList>
    </citation>
    <scope>IDENTIFICATION AS A DRUG TARGET [LARGE SCALE ANALYSIS]</scope>
</reference>
<sequence>MEEMALAQQVPNLGLARFSVQDKSILITGATGSLGRVAARALADAGARLTLAGGNSAGLAELVNGAGIDDAAVVTCRPDSLADAQQMVEAALGRYGRLDGVLVASGSNHVAPITEMAVEDFDAVMDANVRGAWLVCRAAGRVLLEQGQGGSVVLVSSVRGGLGNAAGYSAYCPSKAGTDLLAKTLAAEWGGHGIRVNALAPTVFRSAVTEWMFTDDPKGRATREAMLARIPLRRFAEPEDFVGALIYLLSDASSFYTGQVMYLDGGYTAC</sequence>
<dbReference type="EC" id="1.-.-.-"/>
<dbReference type="EMBL" id="AL123456">
    <property type="protein sequence ID" value="CCP44480.1"/>
    <property type="molecule type" value="Genomic_DNA"/>
</dbReference>
<dbReference type="PIR" id="B70817">
    <property type="entry name" value="B70817"/>
</dbReference>
<dbReference type="RefSeq" id="NP_216230.1">
    <property type="nucleotide sequence ID" value="NC_000962.3"/>
</dbReference>
<dbReference type="RefSeq" id="WP_003408444.1">
    <property type="nucleotide sequence ID" value="NZ_NVQJ01000010.1"/>
</dbReference>
<dbReference type="SMR" id="P9WGQ3"/>
<dbReference type="STRING" id="83332.Rv1714"/>
<dbReference type="PaxDb" id="83332-Rv1714"/>
<dbReference type="GeneID" id="885159"/>
<dbReference type="KEGG" id="mtu:Rv1714"/>
<dbReference type="KEGG" id="mtv:RVBD_1714"/>
<dbReference type="TubercuList" id="Rv1714"/>
<dbReference type="eggNOG" id="COG1028">
    <property type="taxonomic scope" value="Bacteria"/>
</dbReference>
<dbReference type="InParanoid" id="P9WGQ3"/>
<dbReference type="OrthoDB" id="286404at2"/>
<dbReference type="PhylomeDB" id="P9WGQ3"/>
<dbReference type="Proteomes" id="UP000001584">
    <property type="component" value="Chromosome"/>
</dbReference>
<dbReference type="GO" id="GO:0005829">
    <property type="term" value="C:cytosol"/>
    <property type="evidence" value="ECO:0007005"/>
    <property type="project" value="MTBBASE"/>
</dbReference>
<dbReference type="GO" id="GO:0016491">
    <property type="term" value="F:oxidoreductase activity"/>
    <property type="evidence" value="ECO:0007669"/>
    <property type="project" value="UniProtKB-KW"/>
</dbReference>
<dbReference type="CDD" id="cd05233">
    <property type="entry name" value="SDR_c"/>
    <property type="match status" value="1"/>
</dbReference>
<dbReference type="FunFam" id="3.40.50.720:FF:000084">
    <property type="entry name" value="Short-chain dehydrogenase reductase"/>
    <property type="match status" value="1"/>
</dbReference>
<dbReference type="Gene3D" id="3.40.50.720">
    <property type="entry name" value="NAD(P)-binding Rossmann-like Domain"/>
    <property type="match status" value="1"/>
</dbReference>
<dbReference type="InterPro" id="IPR036291">
    <property type="entry name" value="NAD(P)-bd_dom_sf"/>
</dbReference>
<dbReference type="InterPro" id="IPR002347">
    <property type="entry name" value="SDR_fam"/>
</dbReference>
<dbReference type="PANTHER" id="PTHR42760">
    <property type="entry name" value="SHORT-CHAIN DEHYDROGENASES/REDUCTASES FAMILY MEMBER"/>
    <property type="match status" value="1"/>
</dbReference>
<dbReference type="Pfam" id="PF13561">
    <property type="entry name" value="adh_short_C2"/>
    <property type="match status" value="1"/>
</dbReference>
<dbReference type="PRINTS" id="PR00081">
    <property type="entry name" value="GDHRDH"/>
</dbReference>
<dbReference type="PRINTS" id="PR00080">
    <property type="entry name" value="SDRFAMILY"/>
</dbReference>
<dbReference type="SMART" id="SM00822">
    <property type="entry name" value="PKS_KR"/>
    <property type="match status" value="1"/>
</dbReference>
<dbReference type="SUPFAM" id="SSF51735">
    <property type="entry name" value="NAD(P)-binding Rossmann-fold domains"/>
    <property type="match status" value="1"/>
</dbReference>
<organism>
    <name type="scientific">Mycobacterium tuberculosis (strain ATCC 25618 / H37Rv)</name>
    <dbReference type="NCBI Taxonomy" id="83332"/>
    <lineage>
        <taxon>Bacteria</taxon>
        <taxon>Bacillati</taxon>
        <taxon>Actinomycetota</taxon>
        <taxon>Actinomycetes</taxon>
        <taxon>Mycobacteriales</taxon>
        <taxon>Mycobacteriaceae</taxon>
        <taxon>Mycobacterium</taxon>
        <taxon>Mycobacterium tuberculosis complex</taxon>
    </lineage>
</organism>
<accession>P9WGQ3</accession>
<accession>L0T923</accession>
<accession>O53927</accession>
<accession>Q7D837</accession>
<feature type="chain" id="PRO_0000415508" description="Uncharacterized oxidoreductase Rv1714">
    <location>
        <begin position="1"/>
        <end position="270"/>
    </location>
</feature>
<feature type="active site" description="Proton acceptor" evidence="1">
    <location>
        <position position="171"/>
    </location>
</feature>
<feature type="binding site" evidence="1">
    <location>
        <begin position="30"/>
        <end position="55"/>
    </location>
    <ligand>
        <name>NADP(+)</name>
        <dbReference type="ChEBI" id="CHEBI:58349"/>
    </ligand>
</feature>
<feature type="binding site" evidence="1">
    <location>
        <position position="157"/>
    </location>
    <ligand>
        <name>substrate</name>
    </ligand>
</feature>
<name>Y1714_MYCTU</name>